<sequence>MAGYEVNFDGLVGLTHHYAGLSFGNEASTRHQNTLSNPRLAAKQGLLKMKALADLGYKQGVLPPQERPAMGVLRQLGFSGSDEQVLSEVVRKSPRLLSAVSSASSMWTANAATVSPAADSADGRVHFTVANLNNKFHRAIEADTTSAILKSIFNNHRHFVHHDALPSVELFGDEGAANHNRLGGEYDRPAIQVFVYGRQGFEGGAMPSRYPARQTLEASEAVARLHLLDPERAVFVQQNPAVIDQGVFHNDVIAVSNQNVLFHHQHAFVPDIRVMEDLRRKMGRIEQQLFTIEVPAAQVSVAQAVSSYLFNSQLLSKANGKMLLVIPQESQECPAVWEYLSELINSGGPIDEVRVFDLRESMHNGGGPACLRLRVALNDTELAAVNSRVMMTPALFVALNNWVDQHYRDRLQFKDLADPQLLQEGRQALDELTKILNLGSIYPFQHL</sequence>
<gene>
    <name evidence="1" type="primary">astB</name>
    <name type="ordered locus">YE2466</name>
</gene>
<organism>
    <name type="scientific">Yersinia enterocolitica serotype O:8 / biotype 1B (strain NCTC 13174 / 8081)</name>
    <dbReference type="NCBI Taxonomy" id="393305"/>
    <lineage>
        <taxon>Bacteria</taxon>
        <taxon>Pseudomonadati</taxon>
        <taxon>Pseudomonadota</taxon>
        <taxon>Gammaproteobacteria</taxon>
        <taxon>Enterobacterales</taxon>
        <taxon>Yersiniaceae</taxon>
        <taxon>Yersinia</taxon>
    </lineage>
</organism>
<reference key="1">
    <citation type="journal article" date="2006" name="PLoS Genet.">
        <title>The complete genome sequence and comparative genome analysis of the high pathogenicity Yersinia enterocolitica strain 8081.</title>
        <authorList>
            <person name="Thomson N.R."/>
            <person name="Howard S."/>
            <person name="Wren B.W."/>
            <person name="Holden M.T.G."/>
            <person name="Crossman L."/>
            <person name="Challis G.L."/>
            <person name="Churcher C."/>
            <person name="Mungall K."/>
            <person name="Brooks K."/>
            <person name="Chillingworth T."/>
            <person name="Feltwell T."/>
            <person name="Abdellah Z."/>
            <person name="Hauser H."/>
            <person name="Jagels K."/>
            <person name="Maddison M."/>
            <person name="Moule S."/>
            <person name="Sanders M."/>
            <person name="Whitehead S."/>
            <person name="Quail M.A."/>
            <person name="Dougan G."/>
            <person name="Parkhill J."/>
            <person name="Prentice M.B."/>
        </authorList>
    </citation>
    <scope>NUCLEOTIDE SEQUENCE [LARGE SCALE GENOMIC DNA]</scope>
    <source>
        <strain>NCTC 13174 / 8081</strain>
    </source>
</reference>
<feature type="chain" id="PRO_1000065742" description="N-succinylarginine dihydrolase">
    <location>
        <begin position="1"/>
        <end position="447"/>
    </location>
</feature>
<feature type="active site" evidence="1">
    <location>
        <position position="174"/>
    </location>
</feature>
<feature type="active site" evidence="1">
    <location>
        <position position="249"/>
    </location>
</feature>
<feature type="active site" description="Nucleophile" evidence="1">
    <location>
        <position position="370"/>
    </location>
</feature>
<feature type="binding site" evidence="1">
    <location>
        <begin position="19"/>
        <end position="28"/>
    </location>
    <ligand>
        <name>substrate</name>
    </ligand>
</feature>
<feature type="binding site" evidence="1">
    <location>
        <position position="110"/>
    </location>
    <ligand>
        <name>substrate</name>
    </ligand>
</feature>
<feature type="binding site" evidence="1">
    <location>
        <begin position="137"/>
        <end position="138"/>
    </location>
    <ligand>
        <name>substrate</name>
    </ligand>
</feature>
<feature type="binding site" evidence="1">
    <location>
        <position position="213"/>
    </location>
    <ligand>
        <name>substrate</name>
    </ligand>
</feature>
<feature type="binding site" evidence="1">
    <location>
        <position position="251"/>
    </location>
    <ligand>
        <name>substrate</name>
    </ligand>
</feature>
<feature type="binding site" evidence="1">
    <location>
        <position position="364"/>
    </location>
    <ligand>
        <name>substrate</name>
    </ligand>
</feature>
<keyword id="KW-0056">Arginine metabolism</keyword>
<keyword id="KW-0378">Hydrolase</keyword>
<comment type="function">
    <text evidence="1">Catalyzes the hydrolysis of N(2)-succinylarginine into N(2)-succinylornithine, ammonia and CO(2).</text>
</comment>
<comment type="catalytic activity">
    <reaction evidence="1">
        <text>N(2)-succinyl-L-arginine + 2 H2O + 2 H(+) = N(2)-succinyl-L-ornithine + 2 NH4(+) + CO2</text>
        <dbReference type="Rhea" id="RHEA:19533"/>
        <dbReference type="ChEBI" id="CHEBI:15377"/>
        <dbReference type="ChEBI" id="CHEBI:15378"/>
        <dbReference type="ChEBI" id="CHEBI:16526"/>
        <dbReference type="ChEBI" id="CHEBI:28938"/>
        <dbReference type="ChEBI" id="CHEBI:58241"/>
        <dbReference type="ChEBI" id="CHEBI:58514"/>
        <dbReference type="EC" id="3.5.3.23"/>
    </reaction>
</comment>
<comment type="pathway">
    <text evidence="1">Amino-acid degradation; L-arginine degradation via AST pathway; L-glutamate and succinate from L-arginine: step 2/5.</text>
</comment>
<comment type="subunit">
    <text evidence="1">Homodimer.</text>
</comment>
<comment type="similarity">
    <text evidence="1">Belongs to the succinylarginine dihydrolase family.</text>
</comment>
<protein>
    <recommendedName>
        <fullName evidence="1">N-succinylarginine dihydrolase</fullName>
        <ecNumber evidence="1">3.5.3.23</ecNumber>
    </recommendedName>
</protein>
<proteinExistence type="inferred from homology"/>
<evidence type="ECO:0000255" key="1">
    <source>
        <dbReference type="HAMAP-Rule" id="MF_01172"/>
    </source>
</evidence>
<accession>A1JS35</accession>
<dbReference type="EC" id="3.5.3.23" evidence="1"/>
<dbReference type="EMBL" id="AM286415">
    <property type="protein sequence ID" value="CAL12509.1"/>
    <property type="molecule type" value="Genomic_DNA"/>
</dbReference>
<dbReference type="RefSeq" id="WP_011816558.1">
    <property type="nucleotide sequence ID" value="NC_008800.1"/>
</dbReference>
<dbReference type="RefSeq" id="YP_001006673.1">
    <property type="nucleotide sequence ID" value="NC_008800.1"/>
</dbReference>
<dbReference type="SMR" id="A1JS35"/>
<dbReference type="KEGG" id="yen:YE2466"/>
<dbReference type="PATRIC" id="fig|393305.7.peg.2617"/>
<dbReference type="eggNOG" id="COG3724">
    <property type="taxonomic scope" value="Bacteria"/>
</dbReference>
<dbReference type="HOGENOM" id="CLU_053835_0_0_6"/>
<dbReference type="OrthoDB" id="248552at2"/>
<dbReference type="UniPathway" id="UPA00185">
    <property type="reaction ID" value="UER00280"/>
</dbReference>
<dbReference type="Proteomes" id="UP000000642">
    <property type="component" value="Chromosome"/>
</dbReference>
<dbReference type="GO" id="GO:0009015">
    <property type="term" value="F:N-succinylarginine dihydrolase activity"/>
    <property type="evidence" value="ECO:0007669"/>
    <property type="project" value="UniProtKB-UniRule"/>
</dbReference>
<dbReference type="GO" id="GO:0019544">
    <property type="term" value="P:arginine catabolic process to glutamate"/>
    <property type="evidence" value="ECO:0007669"/>
    <property type="project" value="UniProtKB-UniRule"/>
</dbReference>
<dbReference type="GO" id="GO:0019545">
    <property type="term" value="P:arginine catabolic process to succinate"/>
    <property type="evidence" value="ECO:0007669"/>
    <property type="project" value="UniProtKB-UniRule"/>
</dbReference>
<dbReference type="Gene3D" id="3.75.10.20">
    <property type="entry name" value="Succinylarginine dihydrolase"/>
    <property type="match status" value="1"/>
</dbReference>
<dbReference type="HAMAP" id="MF_01172">
    <property type="entry name" value="AstB"/>
    <property type="match status" value="1"/>
</dbReference>
<dbReference type="InterPro" id="IPR037031">
    <property type="entry name" value="AstB_sf"/>
</dbReference>
<dbReference type="InterPro" id="IPR007079">
    <property type="entry name" value="SuccinylArg_d-Hdrlase_AstB"/>
</dbReference>
<dbReference type="NCBIfam" id="TIGR03241">
    <property type="entry name" value="arg_catab_astB"/>
    <property type="match status" value="1"/>
</dbReference>
<dbReference type="NCBIfam" id="NF009789">
    <property type="entry name" value="PRK13281.1"/>
    <property type="match status" value="1"/>
</dbReference>
<dbReference type="PANTHER" id="PTHR30420">
    <property type="entry name" value="N-SUCCINYLARGININE DIHYDROLASE"/>
    <property type="match status" value="1"/>
</dbReference>
<dbReference type="PANTHER" id="PTHR30420:SF2">
    <property type="entry name" value="N-SUCCINYLARGININE DIHYDROLASE"/>
    <property type="match status" value="1"/>
</dbReference>
<dbReference type="Pfam" id="PF04996">
    <property type="entry name" value="AstB"/>
    <property type="match status" value="1"/>
</dbReference>
<dbReference type="SUPFAM" id="SSF55909">
    <property type="entry name" value="Pentein"/>
    <property type="match status" value="1"/>
</dbReference>
<name>ASTB_YERE8</name>